<feature type="chain" id="PRO_1000119075" description="3-dehydroquinate synthase">
    <location>
        <begin position="1"/>
        <end position="378"/>
    </location>
</feature>
<feature type="binding site" evidence="1">
    <location>
        <begin position="115"/>
        <end position="119"/>
    </location>
    <ligand>
        <name>NAD(+)</name>
        <dbReference type="ChEBI" id="CHEBI:57540"/>
    </ligand>
</feature>
<feature type="binding site" evidence="1">
    <location>
        <begin position="139"/>
        <end position="140"/>
    </location>
    <ligand>
        <name>NAD(+)</name>
        <dbReference type="ChEBI" id="CHEBI:57540"/>
    </ligand>
</feature>
<feature type="binding site" evidence="1">
    <location>
        <position position="152"/>
    </location>
    <ligand>
        <name>NAD(+)</name>
        <dbReference type="ChEBI" id="CHEBI:57540"/>
    </ligand>
</feature>
<feature type="binding site" evidence="1">
    <location>
        <position position="161"/>
    </location>
    <ligand>
        <name>NAD(+)</name>
        <dbReference type="ChEBI" id="CHEBI:57540"/>
    </ligand>
</feature>
<feature type="binding site" evidence="1">
    <location>
        <position position="194"/>
    </location>
    <ligand>
        <name>Zn(2+)</name>
        <dbReference type="ChEBI" id="CHEBI:29105"/>
    </ligand>
</feature>
<feature type="binding site" evidence="1">
    <location>
        <position position="256"/>
    </location>
    <ligand>
        <name>Zn(2+)</name>
        <dbReference type="ChEBI" id="CHEBI:29105"/>
    </ligand>
</feature>
<feature type="binding site" evidence="1">
    <location>
        <position position="275"/>
    </location>
    <ligand>
        <name>Zn(2+)</name>
        <dbReference type="ChEBI" id="CHEBI:29105"/>
    </ligand>
</feature>
<gene>
    <name evidence="1" type="primary">aroB</name>
    <name type="ordered locus">BMEA_A2088</name>
</gene>
<reference key="1">
    <citation type="submission" date="2009-03" db="EMBL/GenBank/DDBJ databases">
        <title>Brucella melitensis ATCC 23457 whole genome shotgun sequencing project.</title>
        <authorList>
            <person name="Setubal J.C."/>
            <person name="Boyle S."/>
            <person name="Crasta O.R."/>
            <person name="Gillespie J.J."/>
            <person name="Kenyon R.W."/>
            <person name="Lu J."/>
            <person name="Mane S."/>
            <person name="Nagrani S."/>
            <person name="Shallom J.M."/>
            <person name="Shallom S."/>
            <person name="Shukla M."/>
            <person name="Snyder E.E."/>
            <person name="Sobral B.W."/>
            <person name="Wattam A.R."/>
            <person name="Will R."/>
            <person name="Williams K."/>
            <person name="Yoo H."/>
            <person name="Munk C."/>
            <person name="Tapia R."/>
            <person name="Han C."/>
            <person name="Detter J.C."/>
            <person name="Bruce D."/>
            <person name="Brettin T.S."/>
        </authorList>
    </citation>
    <scope>NUCLEOTIDE SEQUENCE [LARGE SCALE GENOMIC DNA]</scope>
    <source>
        <strain>ATCC 23457</strain>
    </source>
</reference>
<organism>
    <name type="scientific">Brucella melitensis biotype 2 (strain ATCC 23457)</name>
    <dbReference type="NCBI Taxonomy" id="546272"/>
    <lineage>
        <taxon>Bacteria</taxon>
        <taxon>Pseudomonadati</taxon>
        <taxon>Pseudomonadota</taxon>
        <taxon>Alphaproteobacteria</taxon>
        <taxon>Hyphomicrobiales</taxon>
        <taxon>Brucellaceae</taxon>
        <taxon>Brucella/Ochrobactrum group</taxon>
        <taxon>Brucella</taxon>
    </lineage>
</organism>
<proteinExistence type="inferred from homology"/>
<evidence type="ECO:0000255" key="1">
    <source>
        <dbReference type="HAMAP-Rule" id="MF_00110"/>
    </source>
</evidence>
<name>AROB_BRUMB</name>
<accession>C0RFR9</accession>
<dbReference type="EC" id="4.2.3.4" evidence="1"/>
<dbReference type="EMBL" id="CP001488">
    <property type="protein sequence ID" value="ACO01741.1"/>
    <property type="molecule type" value="Genomic_DNA"/>
</dbReference>
<dbReference type="RefSeq" id="WP_004684507.1">
    <property type="nucleotide sequence ID" value="NC_012441.1"/>
</dbReference>
<dbReference type="SMR" id="C0RFR9"/>
<dbReference type="GeneID" id="97534707"/>
<dbReference type="KEGG" id="bmi:BMEA_A2088"/>
<dbReference type="HOGENOM" id="CLU_001201_0_2_5"/>
<dbReference type="UniPathway" id="UPA00053">
    <property type="reaction ID" value="UER00085"/>
</dbReference>
<dbReference type="Proteomes" id="UP000001748">
    <property type="component" value="Chromosome I"/>
</dbReference>
<dbReference type="GO" id="GO:0005737">
    <property type="term" value="C:cytoplasm"/>
    <property type="evidence" value="ECO:0007669"/>
    <property type="project" value="UniProtKB-SubCell"/>
</dbReference>
<dbReference type="GO" id="GO:0003856">
    <property type="term" value="F:3-dehydroquinate synthase activity"/>
    <property type="evidence" value="ECO:0007669"/>
    <property type="project" value="UniProtKB-UniRule"/>
</dbReference>
<dbReference type="GO" id="GO:0046872">
    <property type="term" value="F:metal ion binding"/>
    <property type="evidence" value="ECO:0007669"/>
    <property type="project" value="UniProtKB-KW"/>
</dbReference>
<dbReference type="GO" id="GO:0000166">
    <property type="term" value="F:nucleotide binding"/>
    <property type="evidence" value="ECO:0007669"/>
    <property type="project" value="UniProtKB-KW"/>
</dbReference>
<dbReference type="GO" id="GO:0008652">
    <property type="term" value="P:amino acid biosynthetic process"/>
    <property type="evidence" value="ECO:0007669"/>
    <property type="project" value="UniProtKB-KW"/>
</dbReference>
<dbReference type="GO" id="GO:0009073">
    <property type="term" value="P:aromatic amino acid family biosynthetic process"/>
    <property type="evidence" value="ECO:0007669"/>
    <property type="project" value="UniProtKB-KW"/>
</dbReference>
<dbReference type="GO" id="GO:0009423">
    <property type="term" value="P:chorismate biosynthetic process"/>
    <property type="evidence" value="ECO:0007669"/>
    <property type="project" value="UniProtKB-UniRule"/>
</dbReference>
<dbReference type="CDD" id="cd08195">
    <property type="entry name" value="DHQS"/>
    <property type="match status" value="1"/>
</dbReference>
<dbReference type="FunFam" id="3.40.50.1970:FF:000007">
    <property type="entry name" value="Pentafunctional AROM polypeptide"/>
    <property type="match status" value="1"/>
</dbReference>
<dbReference type="Gene3D" id="3.40.50.1970">
    <property type="match status" value="1"/>
</dbReference>
<dbReference type="Gene3D" id="1.20.1090.10">
    <property type="entry name" value="Dehydroquinate synthase-like - alpha domain"/>
    <property type="match status" value="1"/>
</dbReference>
<dbReference type="HAMAP" id="MF_00110">
    <property type="entry name" value="DHQ_synthase"/>
    <property type="match status" value="1"/>
</dbReference>
<dbReference type="InterPro" id="IPR050071">
    <property type="entry name" value="Dehydroquinate_synthase"/>
</dbReference>
<dbReference type="InterPro" id="IPR016037">
    <property type="entry name" value="DHQ_synth_AroB"/>
</dbReference>
<dbReference type="InterPro" id="IPR030963">
    <property type="entry name" value="DHQ_synth_fam"/>
</dbReference>
<dbReference type="InterPro" id="IPR030960">
    <property type="entry name" value="DHQS/DOIS_N"/>
</dbReference>
<dbReference type="InterPro" id="IPR056179">
    <property type="entry name" value="DHQS_C"/>
</dbReference>
<dbReference type="NCBIfam" id="TIGR01357">
    <property type="entry name" value="aroB"/>
    <property type="match status" value="1"/>
</dbReference>
<dbReference type="PANTHER" id="PTHR43622">
    <property type="entry name" value="3-DEHYDROQUINATE SYNTHASE"/>
    <property type="match status" value="1"/>
</dbReference>
<dbReference type="PANTHER" id="PTHR43622:SF7">
    <property type="entry name" value="3-DEHYDROQUINATE SYNTHASE, CHLOROPLASTIC"/>
    <property type="match status" value="1"/>
</dbReference>
<dbReference type="Pfam" id="PF01761">
    <property type="entry name" value="DHQ_synthase"/>
    <property type="match status" value="1"/>
</dbReference>
<dbReference type="Pfam" id="PF24621">
    <property type="entry name" value="DHQS_C"/>
    <property type="match status" value="1"/>
</dbReference>
<dbReference type="PIRSF" id="PIRSF001455">
    <property type="entry name" value="DHQ_synth"/>
    <property type="match status" value="1"/>
</dbReference>
<dbReference type="SUPFAM" id="SSF56796">
    <property type="entry name" value="Dehydroquinate synthase-like"/>
    <property type="match status" value="1"/>
</dbReference>
<sequence length="378" mass="39839">MNAPTTVADSVTVPVSLGDRSYDILIGKGLVERAGEEVAKRLKGVRVAIVTDENVAAVHLERLQASFARAGIDSTPVIVAPGEKSKSFATLETVTNAILAAKLERGDAVVALGGGVVGDLSGFVAGIVRRGMNFVQMPTSLLAQVDSSVGGKTGINTAHGKNLVGVFNQPQLVLADTQVLDTLSPREFRAGYAEVAKYGLIDRPDFFAWLEANWQEVFSGGAARTKAIAESCRSKAAVVARDERETGDRALLNLGHTFGHALESATGYDSSRLVHGEGVAIGMALAYRFSARMNLAGIEAAERVEAHLKAVGLPVSLAEVPGGLPPAEKLMDYIAQDKKVTRGTLTFILTHGIGQSFIAKDVPPAAVLEFLKERLAIA</sequence>
<comment type="function">
    <text evidence="1">Catalyzes the conversion of 3-deoxy-D-arabino-heptulosonate 7-phosphate (DAHP) to dehydroquinate (DHQ).</text>
</comment>
<comment type="catalytic activity">
    <reaction evidence="1">
        <text>7-phospho-2-dehydro-3-deoxy-D-arabino-heptonate = 3-dehydroquinate + phosphate</text>
        <dbReference type="Rhea" id="RHEA:21968"/>
        <dbReference type="ChEBI" id="CHEBI:32364"/>
        <dbReference type="ChEBI" id="CHEBI:43474"/>
        <dbReference type="ChEBI" id="CHEBI:58394"/>
        <dbReference type="EC" id="4.2.3.4"/>
    </reaction>
</comment>
<comment type="cofactor">
    <cofactor evidence="1">
        <name>Co(2+)</name>
        <dbReference type="ChEBI" id="CHEBI:48828"/>
    </cofactor>
    <cofactor evidence="1">
        <name>Zn(2+)</name>
        <dbReference type="ChEBI" id="CHEBI:29105"/>
    </cofactor>
    <text evidence="1">Binds 1 divalent metal cation per subunit. Can use either Co(2+) or Zn(2+).</text>
</comment>
<comment type="cofactor">
    <cofactor evidence="1">
        <name>NAD(+)</name>
        <dbReference type="ChEBI" id="CHEBI:57540"/>
    </cofactor>
</comment>
<comment type="pathway">
    <text evidence="1">Metabolic intermediate biosynthesis; chorismate biosynthesis; chorismate from D-erythrose 4-phosphate and phosphoenolpyruvate: step 2/7.</text>
</comment>
<comment type="subcellular location">
    <subcellularLocation>
        <location evidence="1">Cytoplasm</location>
    </subcellularLocation>
</comment>
<comment type="similarity">
    <text evidence="1">Belongs to the sugar phosphate cyclases superfamily. Dehydroquinate synthase family.</text>
</comment>
<protein>
    <recommendedName>
        <fullName evidence="1">3-dehydroquinate synthase</fullName>
        <shortName evidence="1">DHQS</shortName>
        <ecNumber evidence="1">4.2.3.4</ecNumber>
    </recommendedName>
</protein>
<keyword id="KW-0028">Amino-acid biosynthesis</keyword>
<keyword id="KW-0057">Aromatic amino acid biosynthesis</keyword>
<keyword id="KW-0170">Cobalt</keyword>
<keyword id="KW-0963">Cytoplasm</keyword>
<keyword id="KW-0456">Lyase</keyword>
<keyword id="KW-0479">Metal-binding</keyword>
<keyword id="KW-0520">NAD</keyword>
<keyword id="KW-0547">Nucleotide-binding</keyword>
<keyword id="KW-0862">Zinc</keyword>